<proteinExistence type="evidence at transcript level"/>
<accession>Q1ZXQ7</accession>
<organism>
    <name type="scientific">Dictyostelium discoideum</name>
    <name type="common">Social amoeba</name>
    <dbReference type="NCBI Taxonomy" id="44689"/>
    <lineage>
        <taxon>Eukaryota</taxon>
        <taxon>Amoebozoa</taxon>
        <taxon>Evosea</taxon>
        <taxon>Eumycetozoa</taxon>
        <taxon>Dictyostelia</taxon>
        <taxon>Dictyosteliales</taxon>
        <taxon>Dictyosteliaceae</taxon>
        <taxon>Dictyostelium</taxon>
    </lineage>
</organism>
<dbReference type="EMBL" id="AAFI02000005">
    <property type="protein sequence ID" value="EAS66931.1"/>
    <property type="molecule type" value="Genomic_DNA"/>
</dbReference>
<dbReference type="RefSeq" id="XP_001134467.1">
    <property type="nucleotide sequence ID" value="XM_001134467.1"/>
</dbReference>
<dbReference type="SMR" id="Q1ZXQ7"/>
<dbReference type="FunCoup" id="Q1ZXQ7">
    <property type="interactions" value="12"/>
</dbReference>
<dbReference type="GlyCosmos" id="Q1ZXQ7">
    <property type="glycosylation" value="9 sites, No reported glycans"/>
</dbReference>
<dbReference type="GlyGen" id="Q1ZXQ7">
    <property type="glycosylation" value="9 sites"/>
</dbReference>
<dbReference type="PaxDb" id="44689-DDB0231991"/>
<dbReference type="EnsemblProtists" id="EAS66931">
    <property type="protein sequence ID" value="EAS66931"/>
    <property type="gene ID" value="DDB_G0269386"/>
</dbReference>
<dbReference type="GeneID" id="8616865"/>
<dbReference type="KEGG" id="ddi:DDB_G0269386"/>
<dbReference type="dictyBase" id="DDB_G0269386">
    <property type="gene designation" value="grlK"/>
</dbReference>
<dbReference type="VEuPathDB" id="AmoebaDB:DDB_G0269386"/>
<dbReference type="eggNOG" id="KOG1055">
    <property type="taxonomic scope" value="Eukaryota"/>
</dbReference>
<dbReference type="HOGENOM" id="CLU_365408_0_0_1"/>
<dbReference type="InParanoid" id="Q1ZXQ7"/>
<dbReference type="PhylomeDB" id="Q1ZXQ7"/>
<dbReference type="PRO" id="PR:Q1ZXQ7"/>
<dbReference type="Proteomes" id="UP000002195">
    <property type="component" value="Chromosome 1"/>
</dbReference>
<dbReference type="GO" id="GO:0005886">
    <property type="term" value="C:plasma membrane"/>
    <property type="evidence" value="ECO:0000318"/>
    <property type="project" value="GO_Central"/>
</dbReference>
<dbReference type="GO" id="GO:0004930">
    <property type="term" value="F:G protein-coupled receptor activity"/>
    <property type="evidence" value="ECO:0000318"/>
    <property type="project" value="GO_Central"/>
</dbReference>
<dbReference type="GO" id="GO:0007186">
    <property type="term" value="P:G protein-coupled receptor signaling pathway"/>
    <property type="evidence" value="ECO:0000318"/>
    <property type="project" value="GO_Central"/>
</dbReference>
<dbReference type="CDD" id="cd15047">
    <property type="entry name" value="7tmC_GABA-B-like"/>
    <property type="match status" value="1"/>
</dbReference>
<dbReference type="Gene3D" id="3.40.50.2300">
    <property type="match status" value="2"/>
</dbReference>
<dbReference type="InterPro" id="IPR017978">
    <property type="entry name" value="GPCR_3_C"/>
</dbReference>
<dbReference type="InterPro" id="IPR051530">
    <property type="entry name" value="mGluR/GABA-B-like"/>
</dbReference>
<dbReference type="InterPro" id="IPR003760">
    <property type="entry name" value="PnrA-like"/>
</dbReference>
<dbReference type="PANTHER" id="PTHR46924:SF3">
    <property type="entry name" value="METABOTROPIC GLUTAMATE RECEPTOR-LIKE PROTEIN C-RELATED"/>
    <property type="match status" value="1"/>
</dbReference>
<dbReference type="PANTHER" id="PTHR46924">
    <property type="entry name" value="METABOTROPIC GLUTAMATE RECEPTOR-LIKE PROTEIN C-RELATED-RELATED"/>
    <property type="match status" value="1"/>
</dbReference>
<dbReference type="Pfam" id="PF00003">
    <property type="entry name" value="7tm_3"/>
    <property type="match status" value="1"/>
</dbReference>
<dbReference type="Pfam" id="PF02608">
    <property type="entry name" value="Bmp"/>
    <property type="match status" value="1"/>
</dbReference>
<dbReference type="PRINTS" id="PR01176">
    <property type="entry name" value="GABABRECEPTR"/>
</dbReference>
<dbReference type="PROSITE" id="PS50259">
    <property type="entry name" value="G_PROTEIN_RECEP_F3_4"/>
    <property type="match status" value="1"/>
</dbReference>
<name>GRLK_DICDI</name>
<protein>
    <recommendedName>
        <fullName>Metabotropic glutamate receptor-like protein K</fullName>
    </recommendedName>
</protein>
<feature type="signal peptide" evidence="1">
    <location>
        <begin position="1"/>
        <end position="21"/>
    </location>
</feature>
<feature type="chain" id="PRO_0000370354" description="Metabotropic glutamate receptor-like protein K">
    <location>
        <begin position="22"/>
        <end position="704"/>
    </location>
</feature>
<feature type="topological domain" description="Extracellular" evidence="1">
    <location>
        <begin position="22"/>
        <end position="383"/>
    </location>
</feature>
<feature type="transmembrane region" description="Helical; Name=1" evidence="1">
    <location>
        <begin position="384"/>
        <end position="404"/>
    </location>
</feature>
<feature type="topological domain" description="Cytoplasmic" evidence="1">
    <location>
        <begin position="405"/>
        <end position="419"/>
    </location>
</feature>
<feature type="transmembrane region" description="Helical; Name=2" evidence="1">
    <location>
        <begin position="420"/>
        <end position="440"/>
    </location>
</feature>
<feature type="topological domain" description="Extracellular" evidence="1">
    <location>
        <begin position="441"/>
        <end position="455"/>
    </location>
</feature>
<feature type="transmembrane region" description="Helical; Name=3" evidence="1">
    <location>
        <begin position="456"/>
        <end position="476"/>
    </location>
</feature>
<feature type="topological domain" description="Cytoplasmic" evidence="1">
    <location>
        <begin position="477"/>
        <end position="492"/>
    </location>
</feature>
<feature type="transmembrane region" description="Helical; Name=4" evidence="1">
    <location>
        <begin position="493"/>
        <end position="513"/>
    </location>
</feature>
<feature type="topological domain" description="Extracellular" evidence="1">
    <location>
        <begin position="514"/>
        <end position="541"/>
    </location>
</feature>
<feature type="transmembrane region" description="Helical; Name=5" evidence="1">
    <location>
        <begin position="542"/>
        <end position="562"/>
    </location>
</feature>
<feature type="topological domain" description="Cytoplasmic" evidence="1">
    <location>
        <begin position="563"/>
        <end position="578"/>
    </location>
</feature>
<feature type="transmembrane region" description="Helical; Name=6" evidence="1">
    <location>
        <begin position="579"/>
        <end position="599"/>
    </location>
</feature>
<feature type="topological domain" description="Extracellular" evidence="1">
    <location>
        <begin position="600"/>
        <end position="608"/>
    </location>
</feature>
<feature type="transmembrane region" description="Helical; Name=7" evidence="1">
    <location>
        <begin position="609"/>
        <end position="629"/>
    </location>
</feature>
<feature type="topological domain" description="Cytoplasmic" evidence="1">
    <location>
        <begin position="630"/>
        <end position="704"/>
    </location>
</feature>
<feature type="region of interest" description="Disordered" evidence="2">
    <location>
        <begin position="657"/>
        <end position="677"/>
    </location>
</feature>
<feature type="region of interest" description="Disordered" evidence="2">
    <location>
        <begin position="685"/>
        <end position="704"/>
    </location>
</feature>
<feature type="glycosylation site" description="N-linked (GlcNAc...) asparagine" evidence="1">
    <location>
        <position position="66"/>
    </location>
</feature>
<feature type="glycosylation site" description="N-linked (GlcNAc...) asparagine" evidence="1">
    <location>
        <position position="104"/>
    </location>
</feature>
<feature type="glycosylation site" description="N-linked (GlcNAc...) asparagine" evidence="1">
    <location>
        <position position="256"/>
    </location>
</feature>
<feature type="glycosylation site" description="N-linked (GlcNAc...) asparagine" evidence="1">
    <location>
        <position position="286"/>
    </location>
</feature>
<feature type="glycosylation site" description="N-linked (GlcNAc...) asparagine" evidence="1">
    <location>
        <position position="308"/>
    </location>
</feature>
<feature type="glycosylation site" description="N-linked (GlcNAc...) asparagine" evidence="1">
    <location>
        <position position="337"/>
    </location>
</feature>
<feature type="glycosylation site" description="N-linked (GlcNAc...) asparagine" evidence="1">
    <location>
        <position position="343"/>
    </location>
</feature>
<feature type="glycosylation site" description="N-linked (GlcNAc...) asparagine" evidence="1">
    <location>
        <position position="368"/>
    </location>
</feature>
<feature type="glycosylation site" description="N-linked (GlcNAc...) asparagine" evidence="1">
    <location>
        <position position="538"/>
    </location>
</feature>
<comment type="subcellular location">
    <subcellularLocation>
        <location evidence="4">Membrane</location>
        <topology evidence="4">Multi-pass membrane protein</topology>
    </subcellularLocation>
</comment>
<comment type="developmental stage">
    <text evidence="3">Increased levels found from the tight aggregation stage onward. Levels stayed high during late development. Clear expression at 24 hours when fruiting body formation is close to completion.</text>
</comment>
<comment type="similarity">
    <text evidence="4">In the N-terminal section; belongs to the BMP lipoprotein family.</text>
</comment>
<comment type="similarity">
    <text evidence="4">In the C-terminal section; belongs to the G-protein coupled receptor 3 family. GABA-B receptor subfamily.</text>
</comment>
<keyword id="KW-0297">G-protein coupled receptor</keyword>
<keyword id="KW-0325">Glycoprotein</keyword>
<keyword id="KW-0472">Membrane</keyword>
<keyword id="KW-0675">Receptor</keyword>
<keyword id="KW-1185">Reference proteome</keyword>
<keyword id="KW-0732">Signal</keyword>
<keyword id="KW-0807">Transducer</keyword>
<keyword id="KW-0812">Transmembrane</keyword>
<keyword id="KW-1133">Transmembrane helix</keyword>
<reference key="1">
    <citation type="journal article" date="2005" name="Nature">
        <title>The genome of the social amoeba Dictyostelium discoideum.</title>
        <authorList>
            <person name="Eichinger L."/>
            <person name="Pachebat J.A."/>
            <person name="Gloeckner G."/>
            <person name="Rajandream M.A."/>
            <person name="Sucgang R."/>
            <person name="Berriman M."/>
            <person name="Song J."/>
            <person name="Olsen R."/>
            <person name="Szafranski K."/>
            <person name="Xu Q."/>
            <person name="Tunggal B."/>
            <person name="Kummerfeld S."/>
            <person name="Madera M."/>
            <person name="Konfortov B.A."/>
            <person name="Rivero F."/>
            <person name="Bankier A.T."/>
            <person name="Lehmann R."/>
            <person name="Hamlin N."/>
            <person name="Davies R."/>
            <person name="Gaudet P."/>
            <person name="Fey P."/>
            <person name="Pilcher K."/>
            <person name="Chen G."/>
            <person name="Saunders D."/>
            <person name="Sodergren E.J."/>
            <person name="Davis P."/>
            <person name="Kerhornou A."/>
            <person name="Nie X."/>
            <person name="Hall N."/>
            <person name="Anjard C."/>
            <person name="Hemphill L."/>
            <person name="Bason N."/>
            <person name="Farbrother P."/>
            <person name="Desany B."/>
            <person name="Just E."/>
            <person name="Morio T."/>
            <person name="Rost R."/>
            <person name="Churcher C.M."/>
            <person name="Cooper J."/>
            <person name="Haydock S."/>
            <person name="van Driessche N."/>
            <person name="Cronin A."/>
            <person name="Goodhead I."/>
            <person name="Muzny D.M."/>
            <person name="Mourier T."/>
            <person name="Pain A."/>
            <person name="Lu M."/>
            <person name="Harper D."/>
            <person name="Lindsay R."/>
            <person name="Hauser H."/>
            <person name="James K.D."/>
            <person name="Quiles M."/>
            <person name="Madan Babu M."/>
            <person name="Saito T."/>
            <person name="Buchrieser C."/>
            <person name="Wardroper A."/>
            <person name="Felder M."/>
            <person name="Thangavelu M."/>
            <person name="Johnson D."/>
            <person name="Knights A."/>
            <person name="Loulseged H."/>
            <person name="Mungall K.L."/>
            <person name="Oliver K."/>
            <person name="Price C."/>
            <person name="Quail M.A."/>
            <person name="Urushihara H."/>
            <person name="Hernandez J."/>
            <person name="Rabbinowitsch E."/>
            <person name="Steffen D."/>
            <person name="Sanders M."/>
            <person name="Ma J."/>
            <person name="Kohara Y."/>
            <person name="Sharp S."/>
            <person name="Simmonds M.N."/>
            <person name="Spiegler S."/>
            <person name="Tivey A."/>
            <person name="Sugano S."/>
            <person name="White B."/>
            <person name="Walker D."/>
            <person name="Woodward J.R."/>
            <person name="Winckler T."/>
            <person name="Tanaka Y."/>
            <person name="Shaulsky G."/>
            <person name="Schleicher M."/>
            <person name="Weinstock G.M."/>
            <person name="Rosenthal A."/>
            <person name="Cox E.C."/>
            <person name="Chisholm R.L."/>
            <person name="Gibbs R.A."/>
            <person name="Loomis W.F."/>
            <person name="Platzer M."/>
            <person name="Kay R.R."/>
            <person name="Williams J.G."/>
            <person name="Dear P.H."/>
            <person name="Noegel A.A."/>
            <person name="Barrell B.G."/>
            <person name="Kuspa A."/>
        </authorList>
    </citation>
    <scope>NUCLEOTIDE SEQUENCE [LARGE SCALE GENOMIC DNA]</scope>
    <source>
        <strain>AX4</strain>
    </source>
</reference>
<reference key="2">
    <citation type="journal article" date="2006" name="Eur. J. Cell Biol.">
        <title>The Dictyostelium repertoire of seven transmembrane domain receptors.</title>
        <authorList>
            <person name="Prabhu Y."/>
            <person name="Eichinger L."/>
        </authorList>
    </citation>
    <scope>NOMENCLATURE</scope>
</reference>
<reference key="3">
    <citation type="journal article" date="2007" name="BMC Dev. Biol.">
        <title>GrlJ, a Dictyostelium GABAB-like receptor with roles in post-aggregation development.</title>
        <authorList>
            <person name="Prabhu Y."/>
            <person name="Mueller R."/>
            <person name="Anjard C."/>
            <person name="Noegel A.A."/>
        </authorList>
    </citation>
    <scope>DEVELOPMENTAL STAGE</scope>
</reference>
<sequence>MIKLILSIILIICFIINSIESFKMITLTTGPPSDLGWNNMINLGRIGVTKAMDIEDSRLFVVSGRNDTYELLLPIIQNDDIDLVICSSLDHGDACKEIAAMYVNSTEIKTQFLVRGSGATTKNLIQFTYNYASVNYLSGMFAGLQTKTNKIGFISPGITAGASDCFVYAFWLGAKSVNPNIKFYYYNIGSYLDKDKTKGAAENLIDVYDCDVIGDTLDDFTASNVAISRGRYAIGTNGFPQRDVYGENVVYTYAYNWTKYFVPIASAVKNKIPPSKWYADFNKDNNLSLYDLSFGFQVSAETKFKIINQTKSFASYVRTLHPYFCNEYMEGYTQKYNLTRQPNTTNCITTTGFIGIDAPVGDMNYLGNYTIKFSKVEFQRSIQIGFSIVSGLLIGFVILMMIGIVKYQDTPSIRSASPSFLNLTLLGGVIIFIGIIVWVAPISTHQCNARFWLVTIGFSTLIGSLVVKNIRIWLIFDNPELKIRTITNNQLYPWVGLCLVINIVLMSIITTVGDLKAIEAQGIDSLGKFEYMTICKMNYTGAATLYSILAYFGTLLLVGVFVSWKIRIVHIEEFSECTAIAKTLYSISFCLFVIVPLMISPQDKQSETIILCVTGIFITTGALLIFFLPKFWRIFGNEKQGSHEHFTQRKQSAVASARAESANRNNSSNSFGFSKSSAQIGNTISGIESLNDDSNESSLSNETK</sequence>
<evidence type="ECO:0000255" key="1"/>
<evidence type="ECO:0000256" key="2">
    <source>
        <dbReference type="SAM" id="MobiDB-lite"/>
    </source>
</evidence>
<evidence type="ECO:0000269" key="3">
    <source>
    </source>
</evidence>
<evidence type="ECO:0000305" key="4"/>
<gene>
    <name type="primary">grlK</name>
    <name type="ORF">DDB_G0269386</name>
</gene>